<keyword id="KW-0068">Autocatalytic cleavage</keyword>
<keyword id="KW-0210">Decarboxylase</keyword>
<keyword id="KW-0456">Lyase</keyword>
<keyword id="KW-0620">Polyamine biosynthesis</keyword>
<keyword id="KW-0670">Pyruvate</keyword>
<keyword id="KW-1185">Reference proteome</keyword>
<keyword id="KW-0949">S-adenosyl-L-methionine</keyword>
<keyword id="KW-0704">Schiff base</keyword>
<keyword id="KW-0745">Spermidine biosynthesis</keyword>
<keyword id="KW-0865">Zymogen</keyword>
<gene>
    <name evidence="1" type="primary">speD</name>
    <name type="ordered locus">ECA3334</name>
</gene>
<protein>
    <recommendedName>
        <fullName evidence="1">S-adenosylmethionine decarboxylase proenzyme</fullName>
        <shortName evidence="1">AdoMetDC</shortName>
        <shortName evidence="1">SAMDC</shortName>
        <ecNumber evidence="1">4.1.1.50</ecNumber>
    </recommendedName>
    <component>
        <recommendedName>
            <fullName evidence="1">S-adenosylmethionine decarboxylase beta chain</fullName>
        </recommendedName>
    </component>
    <component>
        <recommendedName>
            <fullName evidence="1">S-adenosylmethionine decarboxylase alpha chain</fullName>
        </recommendedName>
    </component>
</protein>
<name>SPED_PECAS</name>
<proteinExistence type="inferred from homology"/>
<feature type="chain" id="PRO_0000030049" description="S-adenosylmethionine decarboxylase beta chain" evidence="1">
    <location>
        <begin position="1"/>
        <end position="111"/>
    </location>
</feature>
<feature type="chain" id="PRO_0000030050" description="S-adenosylmethionine decarboxylase alpha chain" evidence="1">
    <location>
        <begin position="112"/>
        <end position="264"/>
    </location>
</feature>
<feature type="active site" description="Schiff-base intermediate with substrate; via pyruvic acid" evidence="1">
    <location>
        <position position="112"/>
    </location>
</feature>
<feature type="active site" description="Proton acceptor; for processing activity" evidence="1">
    <location>
        <position position="117"/>
    </location>
</feature>
<feature type="active site" description="Proton donor; for catalytic activity" evidence="1">
    <location>
        <position position="140"/>
    </location>
</feature>
<feature type="site" description="Cleavage (non-hydrolytic); by autolysis" evidence="1">
    <location>
        <begin position="111"/>
        <end position="112"/>
    </location>
</feature>
<feature type="modified residue" description="Pyruvic acid (Ser); by autocatalysis" evidence="1">
    <location>
        <position position="112"/>
    </location>
</feature>
<comment type="function">
    <text evidence="1">Catalyzes the decarboxylation of S-adenosylmethionine to S-adenosylmethioninamine (dcAdoMet), the propylamine donor required for the synthesis of the polyamines spermine and spermidine from the diamine putrescine.</text>
</comment>
<comment type="catalytic activity">
    <reaction evidence="1">
        <text>S-adenosyl-L-methionine + H(+) = S-adenosyl 3-(methylsulfanyl)propylamine + CO2</text>
        <dbReference type="Rhea" id="RHEA:15981"/>
        <dbReference type="ChEBI" id="CHEBI:15378"/>
        <dbReference type="ChEBI" id="CHEBI:16526"/>
        <dbReference type="ChEBI" id="CHEBI:57443"/>
        <dbReference type="ChEBI" id="CHEBI:59789"/>
        <dbReference type="EC" id="4.1.1.50"/>
    </reaction>
</comment>
<comment type="cofactor">
    <cofactor evidence="1">
        <name>pyruvate</name>
        <dbReference type="ChEBI" id="CHEBI:15361"/>
    </cofactor>
    <text evidence="1">Binds 1 pyruvoyl group covalently per subunit.</text>
</comment>
<comment type="pathway">
    <text evidence="1">Amine and polyamine biosynthesis; S-adenosylmethioninamine biosynthesis; S-adenosylmethioninamine from S-adenosyl-L-methionine: step 1/1.</text>
</comment>
<comment type="subunit">
    <text evidence="1">Heterooctamer of four alpha and four beta chains arranged as a tetramer of alpha/beta heterodimers.</text>
</comment>
<comment type="PTM">
    <text evidence="1">Is synthesized initially as an inactive proenzyme. Formation of the active enzyme involves a self-maturation process in which the active site pyruvoyl group is generated from an internal serine residue via an autocatalytic post-translational modification. Two non-identical subunits are generated from the proenzyme in this reaction, and the pyruvate is formed at the N-terminus of the alpha chain, which is derived from the carboxyl end of the proenzyme. The post-translation cleavage follows an unusual pathway, termed non-hydrolytic serinolysis, in which the side chain hydroxyl group of the serine supplies its oxygen atom to form the C-terminus of the beta chain, while the remainder of the serine residue undergoes an oxidative deamination to produce ammonia and the pyruvoyl group blocking the N-terminus of the alpha chain.</text>
</comment>
<comment type="similarity">
    <text evidence="1">Belongs to the prokaryotic AdoMetDC family. Type 2 subfamily.</text>
</comment>
<dbReference type="EC" id="4.1.1.50" evidence="1"/>
<dbReference type="EMBL" id="BX950851">
    <property type="protein sequence ID" value="CAG76232.1"/>
    <property type="molecule type" value="Genomic_DNA"/>
</dbReference>
<dbReference type="RefSeq" id="WP_011094847.1">
    <property type="nucleotide sequence ID" value="NC_004547.2"/>
</dbReference>
<dbReference type="SMR" id="Q6D1W3"/>
<dbReference type="STRING" id="218491.ECA3334"/>
<dbReference type="GeneID" id="57210023"/>
<dbReference type="KEGG" id="eca:ECA3334"/>
<dbReference type="PATRIC" id="fig|218491.5.peg.3385"/>
<dbReference type="eggNOG" id="COG1586">
    <property type="taxonomic scope" value="Bacteria"/>
</dbReference>
<dbReference type="HOGENOM" id="CLU_092007_0_0_6"/>
<dbReference type="OrthoDB" id="5290709at2"/>
<dbReference type="UniPathway" id="UPA00331">
    <property type="reaction ID" value="UER00451"/>
</dbReference>
<dbReference type="Proteomes" id="UP000007966">
    <property type="component" value="Chromosome"/>
</dbReference>
<dbReference type="GO" id="GO:0005829">
    <property type="term" value="C:cytosol"/>
    <property type="evidence" value="ECO:0007669"/>
    <property type="project" value="TreeGrafter"/>
</dbReference>
<dbReference type="GO" id="GO:0004014">
    <property type="term" value="F:adenosylmethionine decarboxylase activity"/>
    <property type="evidence" value="ECO:0007669"/>
    <property type="project" value="UniProtKB-UniRule"/>
</dbReference>
<dbReference type="GO" id="GO:0008295">
    <property type="term" value="P:spermidine biosynthetic process"/>
    <property type="evidence" value="ECO:0007669"/>
    <property type="project" value="UniProtKB-UniRule"/>
</dbReference>
<dbReference type="FunFam" id="3.60.90.10:FF:000001">
    <property type="entry name" value="S-adenosylmethionine decarboxylase proenzyme"/>
    <property type="match status" value="1"/>
</dbReference>
<dbReference type="Gene3D" id="3.60.90.10">
    <property type="entry name" value="S-adenosylmethionine decarboxylase"/>
    <property type="match status" value="1"/>
</dbReference>
<dbReference type="HAMAP" id="MF_00465">
    <property type="entry name" value="AdoMetDC_2"/>
    <property type="match status" value="1"/>
</dbReference>
<dbReference type="InterPro" id="IPR003826">
    <property type="entry name" value="AdoMetDC_fam_prok"/>
</dbReference>
<dbReference type="InterPro" id="IPR009165">
    <property type="entry name" value="S-AdoMet_deCO2ase_bac"/>
</dbReference>
<dbReference type="InterPro" id="IPR016067">
    <property type="entry name" value="S-AdoMet_deCO2ase_core"/>
</dbReference>
<dbReference type="NCBIfam" id="TIGR03331">
    <property type="entry name" value="SAM_DCase_Eco"/>
    <property type="match status" value="1"/>
</dbReference>
<dbReference type="PANTHER" id="PTHR33866">
    <property type="entry name" value="S-ADENOSYLMETHIONINE DECARBOXYLASE PROENZYME"/>
    <property type="match status" value="1"/>
</dbReference>
<dbReference type="PANTHER" id="PTHR33866:SF1">
    <property type="entry name" value="S-ADENOSYLMETHIONINE DECARBOXYLASE PROENZYME"/>
    <property type="match status" value="1"/>
</dbReference>
<dbReference type="Pfam" id="PF02675">
    <property type="entry name" value="AdoMet_dc"/>
    <property type="match status" value="1"/>
</dbReference>
<dbReference type="PIRSF" id="PIRSF001356">
    <property type="entry name" value="SAM_decarboxylas"/>
    <property type="match status" value="1"/>
</dbReference>
<dbReference type="SUPFAM" id="SSF56276">
    <property type="entry name" value="S-adenosylmethionine decarboxylase"/>
    <property type="match status" value="1"/>
</dbReference>
<reference key="1">
    <citation type="journal article" date="2004" name="Proc. Natl. Acad. Sci. U.S.A.">
        <title>Genome sequence of the enterobacterial phytopathogen Erwinia carotovora subsp. atroseptica and characterization of virulence factors.</title>
        <authorList>
            <person name="Bell K.S."/>
            <person name="Sebaihia M."/>
            <person name="Pritchard L."/>
            <person name="Holden M.T.G."/>
            <person name="Hyman L.J."/>
            <person name="Holeva M.C."/>
            <person name="Thomson N.R."/>
            <person name="Bentley S.D."/>
            <person name="Churcher L.J.C."/>
            <person name="Mungall K."/>
            <person name="Atkin R."/>
            <person name="Bason N."/>
            <person name="Brooks K."/>
            <person name="Chillingworth T."/>
            <person name="Clark K."/>
            <person name="Doggett J."/>
            <person name="Fraser A."/>
            <person name="Hance Z."/>
            <person name="Hauser H."/>
            <person name="Jagels K."/>
            <person name="Moule S."/>
            <person name="Norbertczak H."/>
            <person name="Ormond D."/>
            <person name="Price C."/>
            <person name="Quail M.A."/>
            <person name="Sanders M."/>
            <person name="Walker D."/>
            <person name="Whitehead S."/>
            <person name="Salmond G.P.C."/>
            <person name="Birch P.R.J."/>
            <person name="Parkhill J."/>
            <person name="Toth I.K."/>
        </authorList>
    </citation>
    <scope>NUCLEOTIDE SEQUENCE [LARGE SCALE GENOMIC DNA]</scope>
    <source>
        <strain>SCRI 1043 / ATCC BAA-672</strain>
    </source>
</reference>
<organism>
    <name type="scientific">Pectobacterium atrosepticum (strain SCRI 1043 / ATCC BAA-672)</name>
    <name type="common">Erwinia carotovora subsp. atroseptica</name>
    <dbReference type="NCBI Taxonomy" id="218491"/>
    <lineage>
        <taxon>Bacteria</taxon>
        <taxon>Pseudomonadati</taxon>
        <taxon>Pseudomonadota</taxon>
        <taxon>Gammaproteobacteria</taxon>
        <taxon>Enterobacterales</taxon>
        <taxon>Pectobacteriaceae</taxon>
        <taxon>Pectobacterium</taxon>
    </lineage>
</organism>
<accession>Q6D1W3</accession>
<sequence length="264" mass="30357">MHKLKLHGFNNLTKSLSFCIYDICYTKTADDRDGYIAYIDEQYNANRLTEILTETCSIIGANVLNIARQDYDPQGASVTILVSEEPIDPRDVDTSEHPGPLPNSVVAHLDKSHICVHTYPESHPEGGLCTFRADIEVSTCGVISPLKALNYLIHQLESDIVTIDYRVRGFTRDINGVKHFIDHQINSVQNFMSEDMKSLYHMMDVNVYQENIFHTKMLLKDFDLKHYLFNVNPEELSAAERKRITDLLYHEMQEIYYGRNLPVL</sequence>
<evidence type="ECO:0000255" key="1">
    <source>
        <dbReference type="HAMAP-Rule" id="MF_00465"/>
    </source>
</evidence>